<dbReference type="EC" id="3.1.1.29" evidence="1"/>
<dbReference type="EMBL" id="CP000099">
    <property type="protein sequence ID" value="AAZ72088.1"/>
    <property type="molecule type" value="Genomic_DNA"/>
</dbReference>
<dbReference type="SMR" id="Q466V4"/>
<dbReference type="STRING" id="269797.Mbar_A3204"/>
<dbReference type="PaxDb" id="269797-Mbar_A3204"/>
<dbReference type="KEGG" id="mba:Mbar_A3204"/>
<dbReference type="eggNOG" id="arCOG04228">
    <property type="taxonomic scope" value="Archaea"/>
</dbReference>
<dbReference type="HOGENOM" id="CLU_073661_2_2_2"/>
<dbReference type="OrthoDB" id="6075at2157"/>
<dbReference type="GO" id="GO:0005829">
    <property type="term" value="C:cytosol"/>
    <property type="evidence" value="ECO:0007669"/>
    <property type="project" value="TreeGrafter"/>
</dbReference>
<dbReference type="GO" id="GO:0004045">
    <property type="term" value="F:peptidyl-tRNA hydrolase activity"/>
    <property type="evidence" value="ECO:0007669"/>
    <property type="project" value="UniProtKB-UniRule"/>
</dbReference>
<dbReference type="GO" id="GO:0006412">
    <property type="term" value="P:translation"/>
    <property type="evidence" value="ECO:0007669"/>
    <property type="project" value="UniProtKB-UniRule"/>
</dbReference>
<dbReference type="CDD" id="cd02430">
    <property type="entry name" value="PTH2"/>
    <property type="match status" value="1"/>
</dbReference>
<dbReference type="FunFam" id="3.40.1490.10:FF:000001">
    <property type="entry name" value="Peptidyl-tRNA hydrolase 2"/>
    <property type="match status" value="1"/>
</dbReference>
<dbReference type="Gene3D" id="3.40.1490.10">
    <property type="entry name" value="Bit1"/>
    <property type="match status" value="1"/>
</dbReference>
<dbReference type="HAMAP" id="MF_00628">
    <property type="entry name" value="Pept_tRNA_hydro_arch"/>
    <property type="match status" value="1"/>
</dbReference>
<dbReference type="InterPro" id="IPR023476">
    <property type="entry name" value="Pep_tRNA_hydro_II_dom_sf"/>
</dbReference>
<dbReference type="InterPro" id="IPR034759">
    <property type="entry name" value="Pept_tRNA_hydro_arch"/>
</dbReference>
<dbReference type="InterPro" id="IPR002833">
    <property type="entry name" value="PTH2"/>
</dbReference>
<dbReference type="NCBIfam" id="TIGR00283">
    <property type="entry name" value="arch_pth2"/>
    <property type="match status" value="1"/>
</dbReference>
<dbReference type="NCBIfam" id="NF003314">
    <property type="entry name" value="PRK04322.1"/>
    <property type="match status" value="1"/>
</dbReference>
<dbReference type="PANTHER" id="PTHR12649">
    <property type="entry name" value="PEPTIDYL-TRNA HYDROLASE 2"/>
    <property type="match status" value="1"/>
</dbReference>
<dbReference type="PANTHER" id="PTHR12649:SF11">
    <property type="entry name" value="PEPTIDYL-TRNA HYDROLASE 2, MITOCHONDRIAL"/>
    <property type="match status" value="1"/>
</dbReference>
<dbReference type="Pfam" id="PF01981">
    <property type="entry name" value="PTH2"/>
    <property type="match status" value="1"/>
</dbReference>
<dbReference type="SUPFAM" id="SSF102462">
    <property type="entry name" value="Peptidyl-tRNA hydrolase II"/>
    <property type="match status" value="1"/>
</dbReference>
<evidence type="ECO:0000255" key="1">
    <source>
        <dbReference type="HAMAP-Rule" id="MF_00628"/>
    </source>
</evidence>
<gene>
    <name evidence="1" type="primary">pth</name>
    <name type="ordered locus">Mbar_A3204</name>
</gene>
<organism>
    <name type="scientific">Methanosarcina barkeri (strain Fusaro / DSM 804)</name>
    <dbReference type="NCBI Taxonomy" id="269797"/>
    <lineage>
        <taxon>Archaea</taxon>
        <taxon>Methanobacteriati</taxon>
        <taxon>Methanobacteriota</taxon>
        <taxon>Stenosarchaea group</taxon>
        <taxon>Methanomicrobia</taxon>
        <taxon>Methanosarcinales</taxon>
        <taxon>Methanosarcinaceae</taxon>
        <taxon>Methanosarcina</taxon>
    </lineage>
</organism>
<proteinExistence type="inferred from homology"/>
<name>PTH_METBF</name>
<accession>Q466V4</accession>
<sequence length="115" mass="12698">MSEYKQCIVTREDLKLSKGKFAVQVAHAAISASEWASKNDLEKWKEGGQKKIVLKVPTLNDLYELKEKARREGLPTALIQDAGLTEIPPGTVTVLGIGPAKEELIDKVTRNLKLV</sequence>
<protein>
    <recommendedName>
        <fullName evidence="1">Peptidyl-tRNA hydrolase</fullName>
        <shortName evidence="1">PTH</shortName>
        <ecNumber evidence="1">3.1.1.29</ecNumber>
    </recommendedName>
</protein>
<comment type="function">
    <text evidence="1">The natural substrate for this enzyme may be peptidyl-tRNAs which drop off the ribosome during protein synthesis.</text>
</comment>
<comment type="catalytic activity">
    <reaction evidence="1">
        <text>an N-acyl-L-alpha-aminoacyl-tRNA + H2O = an N-acyl-L-amino acid + a tRNA + H(+)</text>
        <dbReference type="Rhea" id="RHEA:54448"/>
        <dbReference type="Rhea" id="RHEA-COMP:10123"/>
        <dbReference type="Rhea" id="RHEA-COMP:13883"/>
        <dbReference type="ChEBI" id="CHEBI:15377"/>
        <dbReference type="ChEBI" id="CHEBI:15378"/>
        <dbReference type="ChEBI" id="CHEBI:59874"/>
        <dbReference type="ChEBI" id="CHEBI:78442"/>
        <dbReference type="ChEBI" id="CHEBI:138191"/>
        <dbReference type="EC" id="3.1.1.29"/>
    </reaction>
</comment>
<comment type="subcellular location">
    <subcellularLocation>
        <location evidence="1">Cytoplasm</location>
    </subcellularLocation>
</comment>
<comment type="similarity">
    <text evidence="1">Belongs to the PTH2 family.</text>
</comment>
<keyword id="KW-0963">Cytoplasm</keyword>
<keyword id="KW-0378">Hydrolase</keyword>
<reference key="1">
    <citation type="journal article" date="2006" name="J. Bacteriol.">
        <title>The Methanosarcina barkeri genome: comparative analysis with Methanosarcina acetivorans and Methanosarcina mazei reveals extensive rearrangement within methanosarcinal genomes.</title>
        <authorList>
            <person name="Maeder D.L."/>
            <person name="Anderson I."/>
            <person name="Brettin T.S."/>
            <person name="Bruce D.C."/>
            <person name="Gilna P."/>
            <person name="Han C.S."/>
            <person name="Lapidus A."/>
            <person name="Metcalf W.W."/>
            <person name="Saunders E."/>
            <person name="Tapia R."/>
            <person name="Sowers K.R."/>
        </authorList>
    </citation>
    <scope>NUCLEOTIDE SEQUENCE [LARGE SCALE GENOMIC DNA]</scope>
    <source>
        <strain>Fusaro / DSM 804</strain>
    </source>
</reference>
<feature type="chain" id="PRO_1000051676" description="Peptidyl-tRNA hydrolase">
    <location>
        <begin position="1"/>
        <end position="115"/>
    </location>
</feature>